<feature type="chain" id="PRO_0000264908" description="UvrABC system protein C">
    <location>
        <begin position="1"/>
        <end position="608"/>
    </location>
</feature>
<feature type="domain" description="GIY-YIG" evidence="1">
    <location>
        <begin position="13"/>
        <end position="91"/>
    </location>
</feature>
<feature type="domain" description="UVR" evidence="1">
    <location>
        <begin position="201"/>
        <end position="236"/>
    </location>
</feature>
<keyword id="KW-0963">Cytoplasm</keyword>
<keyword id="KW-0227">DNA damage</keyword>
<keyword id="KW-0228">DNA excision</keyword>
<keyword id="KW-0234">DNA repair</keyword>
<keyword id="KW-0267">Excision nuclease</keyword>
<keyword id="KW-0742">SOS response</keyword>
<sequence length="608" mass="69184">MFDSKKFLANVTHDPGVYRMFDDKDTVIYVGKAKDLKKRLSSYFRANLSSKKTEALVASICRIETTITTSETEALLLEHNYIKTFQPRYNVLLRDDKSYPYILLTKERHPRITSHRGSKKVTGEYFGPYPHAGAVRETLSLLQKLFPIRQCENSVYANRSRPCLQYQIGRCLAPCVSGYVSDEEYNQQVGYARLFLQGKDQQVLDHLIGKMERASRALNFEEAARYRDQIQAVRSVIEKQFVSNERLDDMDIIAIAYKLGIACVHVLFIRQGKILGNRSYFPKVPENTSLSELTETFVGQFYLQAHQGRTIPNSIIVDRKLEEKAELESLLTDQAGRKVSIQDNIKGNKSKYLHLAQMNAQAALALQLKQSSLIHERYKELQQLLGIEKIHRMECFDISHTMGQQTIASCVVFNEEGPLKSDYRRFNIEGITGGDDYAAMEQALKKRYDKDLELEKIPDIIFIDGGKGQLNRALKVFHELQVKWDKNRPHLIGVAKGVDRKVGLETLIISKQEREINLPADSLALHLIQHIRDESHNHAISGHRKKRQKAFTQSGLETIEGVGAKRRQALLKYLGGMQGVKNATQDEIASVPGISVALAEKIFEALHH</sequence>
<dbReference type="EMBL" id="AE016827">
    <property type="protein sequence ID" value="AAU37544.1"/>
    <property type="molecule type" value="Genomic_DNA"/>
</dbReference>
<dbReference type="RefSeq" id="WP_011200114.1">
    <property type="nucleotide sequence ID" value="NC_006300.1"/>
</dbReference>
<dbReference type="SMR" id="Q65U16"/>
<dbReference type="STRING" id="221988.MS0937"/>
<dbReference type="KEGG" id="msu:MS0937"/>
<dbReference type="eggNOG" id="COG0322">
    <property type="taxonomic scope" value="Bacteria"/>
</dbReference>
<dbReference type="HOGENOM" id="CLU_014841_3_2_6"/>
<dbReference type="OrthoDB" id="9804933at2"/>
<dbReference type="Proteomes" id="UP000000607">
    <property type="component" value="Chromosome"/>
</dbReference>
<dbReference type="GO" id="GO:0005737">
    <property type="term" value="C:cytoplasm"/>
    <property type="evidence" value="ECO:0007669"/>
    <property type="project" value="UniProtKB-SubCell"/>
</dbReference>
<dbReference type="GO" id="GO:0009380">
    <property type="term" value="C:excinuclease repair complex"/>
    <property type="evidence" value="ECO:0007669"/>
    <property type="project" value="InterPro"/>
</dbReference>
<dbReference type="GO" id="GO:0003677">
    <property type="term" value="F:DNA binding"/>
    <property type="evidence" value="ECO:0007669"/>
    <property type="project" value="UniProtKB-UniRule"/>
</dbReference>
<dbReference type="GO" id="GO:0009381">
    <property type="term" value="F:excinuclease ABC activity"/>
    <property type="evidence" value="ECO:0007669"/>
    <property type="project" value="UniProtKB-UniRule"/>
</dbReference>
<dbReference type="GO" id="GO:0006289">
    <property type="term" value="P:nucleotide-excision repair"/>
    <property type="evidence" value="ECO:0007669"/>
    <property type="project" value="UniProtKB-UniRule"/>
</dbReference>
<dbReference type="GO" id="GO:0009432">
    <property type="term" value="P:SOS response"/>
    <property type="evidence" value="ECO:0007669"/>
    <property type="project" value="UniProtKB-UniRule"/>
</dbReference>
<dbReference type="CDD" id="cd10434">
    <property type="entry name" value="GIY-YIG_UvrC_Cho"/>
    <property type="match status" value="1"/>
</dbReference>
<dbReference type="FunFam" id="1.10.150.20:FF:000005">
    <property type="entry name" value="UvrABC system protein C"/>
    <property type="match status" value="1"/>
</dbReference>
<dbReference type="FunFam" id="3.30.420.340:FF:000001">
    <property type="entry name" value="UvrABC system protein C"/>
    <property type="match status" value="1"/>
</dbReference>
<dbReference type="FunFam" id="3.40.1440.10:FF:000001">
    <property type="entry name" value="UvrABC system protein C"/>
    <property type="match status" value="1"/>
</dbReference>
<dbReference type="FunFam" id="4.10.860.10:FF:000002">
    <property type="entry name" value="UvrABC system protein C"/>
    <property type="match status" value="1"/>
</dbReference>
<dbReference type="Gene3D" id="1.10.150.20">
    <property type="entry name" value="5' to 3' exonuclease, C-terminal subdomain"/>
    <property type="match status" value="1"/>
</dbReference>
<dbReference type="Gene3D" id="3.40.1440.10">
    <property type="entry name" value="GIY-YIG endonuclease"/>
    <property type="match status" value="1"/>
</dbReference>
<dbReference type="Gene3D" id="4.10.860.10">
    <property type="entry name" value="UVR domain"/>
    <property type="match status" value="1"/>
</dbReference>
<dbReference type="Gene3D" id="3.30.420.340">
    <property type="entry name" value="UvrC, RNAse H endonuclease domain"/>
    <property type="match status" value="1"/>
</dbReference>
<dbReference type="HAMAP" id="MF_00203">
    <property type="entry name" value="UvrC"/>
    <property type="match status" value="1"/>
</dbReference>
<dbReference type="InterPro" id="IPR000305">
    <property type="entry name" value="GIY-YIG_endonuc"/>
</dbReference>
<dbReference type="InterPro" id="IPR035901">
    <property type="entry name" value="GIY-YIG_endonuc_sf"/>
</dbReference>
<dbReference type="InterPro" id="IPR047296">
    <property type="entry name" value="GIY-YIG_UvrC_Cho"/>
</dbReference>
<dbReference type="InterPro" id="IPR003583">
    <property type="entry name" value="Hlx-hairpin-Hlx_DNA-bd_motif"/>
</dbReference>
<dbReference type="InterPro" id="IPR010994">
    <property type="entry name" value="RuvA_2-like"/>
</dbReference>
<dbReference type="InterPro" id="IPR001943">
    <property type="entry name" value="UVR_dom"/>
</dbReference>
<dbReference type="InterPro" id="IPR036876">
    <property type="entry name" value="UVR_dom_sf"/>
</dbReference>
<dbReference type="InterPro" id="IPR050066">
    <property type="entry name" value="UvrABC_protein_C"/>
</dbReference>
<dbReference type="InterPro" id="IPR004791">
    <property type="entry name" value="UvrC"/>
</dbReference>
<dbReference type="InterPro" id="IPR001162">
    <property type="entry name" value="UvrC_RNase_H_dom"/>
</dbReference>
<dbReference type="InterPro" id="IPR038476">
    <property type="entry name" value="UvrC_RNase_H_dom_sf"/>
</dbReference>
<dbReference type="NCBIfam" id="NF001824">
    <property type="entry name" value="PRK00558.1-5"/>
    <property type="match status" value="1"/>
</dbReference>
<dbReference type="NCBIfam" id="TIGR00194">
    <property type="entry name" value="uvrC"/>
    <property type="match status" value="1"/>
</dbReference>
<dbReference type="PANTHER" id="PTHR30562:SF1">
    <property type="entry name" value="UVRABC SYSTEM PROTEIN C"/>
    <property type="match status" value="1"/>
</dbReference>
<dbReference type="PANTHER" id="PTHR30562">
    <property type="entry name" value="UVRC/OXIDOREDUCTASE"/>
    <property type="match status" value="1"/>
</dbReference>
<dbReference type="Pfam" id="PF01541">
    <property type="entry name" value="GIY-YIG"/>
    <property type="match status" value="1"/>
</dbReference>
<dbReference type="Pfam" id="PF14520">
    <property type="entry name" value="HHH_5"/>
    <property type="match status" value="1"/>
</dbReference>
<dbReference type="Pfam" id="PF02151">
    <property type="entry name" value="UVR"/>
    <property type="match status" value="1"/>
</dbReference>
<dbReference type="Pfam" id="PF22920">
    <property type="entry name" value="UvrC_RNaseH"/>
    <property type="match status" value="1"/>
</dbReference>
<dbReference type="Pfam" id="PF08459">
    <property type="entry name" value="UvrC_RNaseH_dom"/>
    <property type="match status" value="1"/>
</dbReference>
<dbReference type="SMART" id="SM00465">
    <property type="entry name" value="GIYc"/>
    <property type="match status" value="1"/>
</dbReference>
<dbReference type="SMART" id="SM00278">
    <property type="entry name" value="HhH1"/>
    <property type="match status" value="2"/>
</dbReference>
<dbReference type="SUPFAM" id="SSF46600">
    <property type="entry name" value="C-terminal UvrC-binding domain of UvrB"/>
    <property type="match status" value="1"/>
</dbReference>
<dbReference type="SUPFAM" id="SSF82771">
    <property type="entry name" value="GIY-YIG endonuclease"/>
    <property type="match status" value="1"/>
</dbReference>
<dbReference type="SUPFAM" id="SSF47781">
    <property type="entry name" value="RuvA domain 2-like"/>
    <property type="match status" value="1"/>
</dbReference>
<dbReference type="PROSITE" id="PS50164">
    <property type="entry name" value="GIY_YIG"/>
    <property type="match status" value="1"/>
</dbReference>
<dbReference type="PROSITE" id="PS50151">
    <property type="entry name" value="UVR"/>
    <property type="match status" value="1"/>
</dbReference>
<dbReference type="PROSITE" id="PS50165">
    <property type="entry name" value="UVRC"/>
    <property type="match status" value="1"/>
</dbReference>
<comment type="function">
    <text evidence="1">The UvrABC repair system catalyzes the recognition and processing of DNA lesions. UvrC both incises the 5' and 3' sides of the lesion. The N-terminal half is responsible for the 3' incision and the C-terminal half is responsible for the 5' incision.</text>
</comment>
<comment type="subunit">
    <text evidence="1">Interacts with UvrB in an incision complex.</text>
</comment>
<comment type="subcellular location">
    <subcellularLocation>
        <location evidence="1">Cytoplasm</location>
    </subcellularLocation>
</comment>
<comment type="similarity">
    <text evidence="1">Belongs to the UvrC family.</text>
</comment>
<name>UVRC_MANSM</name>
<evidence type="ECO:0000255" key="1">
    <source>
        <dbReference type="HAMAP-Rule" id="MF_00203"/>
    </source>
</evidence>
<gene>
    <name evidence="1" type="primary">uvrC</name>
    <name type="ordered locus">MS0937</name>
</gene>
<reference key="1">
    <citation type="journal article" date="2004" name="Nat. Biotechnol.">
        <title>The genome sequence of the capnophilic rumen bacterium Mannheimia succiniciproducens.</title>
        <authorList>
            <person name="Hong S.H."/>
            <person name="Kim J.S."/>
            <person name="Lee S.Y."/>
            <person name="In Y.H."/>
            <person name="Choi S.S."/>
            <person name="Rih J.-K."/>
            <person name="Kim C.H."/>
            <person name="Jeong H."/>
            <person name="Hur C.G."/>
            <person name="Kim J.J."/>
        </authorList>
    </citation>
    <scope>NUCLEOTIDE SEQUENCE [LARGE SCALE GENOMIC DNA]</scope>
    <source>
        <strain>KCTC 0769BP / MBEL55E</strain>
    </source>
</reference>
<accession>Q65U16</accession>
<protein>
    <recommendedName>
        <fullName evidence="1">UvrABC system protein C</fullName>
        <shortName evidence="1">Protein UvrC</shortName>
    </recommendedName>
    <alternativeName>
        <fullName evidence="1">Excinuclease ABC subunit C</fullName>
    </alternativeName>
</protein>
<organism>
    <name type="scientific">Mannheimia succiniciproducens (strain KCTC 0769BP / MBEL55E)</name>
    <dbReference type="NCBI Taxonomy" id="221988"/>
    <lineage>
        <taxon>Bacteria</taxon>
        <taxon>Pseudomonadati</taxon>
        <taxon>Pseudomonadota</taxon>
        <taxon>Gammaproteobacteria</taxon>
        <taxon>Pasteurellales</taxon>
        <taxon>Pasteurellaceae</taxon>
        <taxon>Basfia</taxon>
    </lineage>
</organism>
<proteinExistence type="inferred from homology"/>